<proteinExistence type="inferred from homology"/>
<evidence type="ECO:0000255" key="1"/>
<evidence type="ECO:0000255" key="2">
    <source>
        <dbReference type="PROSITE-ProRule" id="PRU00521"/>
    </source>
</evidence>
<evidence type="ECO:0000305" key="3"/>
<gene>
    <name type="primary">OR5H2</name>
</gene>
<comment type="function">
    <text evidence="3">Odorant receptor.</text>
</comment>
<comment type="subcellular location">
    <subcellularLocation>
        <location>Cell membrane</location>
        <topology>Multi-pass membrane protein</topology>
    </subcellularLocation>
</comment>
<comment type="similarity">
    <text evidence="2">Belongs to the G-protein coupled receptor 1 family.</text>
</comment>
<comment type="sequence caution" evidence="3">
    <conflict type="erroneous initiation">
        <sequence resource="EMBL-CDS" id="BAC05892"/>
    </conflict>
    <text>Extended N-terminus.</text>
</comment>
<comment type="sequence caution" evidence="3">
    <conflict type="erroneous initiation">
        <sequence resource="EMBL-CDS" id="DAA04773"/>
    </conflict>
    <text>Extended N-terminus.</text>
</comment>
<comment type="online information" name="Human Olfactory Receptor Data Exploratorium (HORDE)">
    <link uri="http://genome.weizmann.ac.il/horde/card/index/symbol:OR5H2"/>
</comment>
<keyword id="KW-1003">Cell membrane</keyword>
<keyword id="KW-1015">Disulfide bond</keyword>
<keyword id="KW-0297">G-protein coupled receptor</keyword>
<keyword id="KW-0325">Glycoprotein</keyword>
<keyword id="KW-0472">Membrane</keyword>
<keyword id="KW-0552">Olfaction</keyword>
<keyword id="KW-0675">Receptor</keyword>
<keyword id="KW-1185">Reference proteome</keyword>
<keyword id="KW-0716">Sensory transduction</keyword>
<keyword id="KW-0807">Transducer</keyword>
<keyword id="KW-0812">Transmembrane</keyword>
<keyword id="KW-1133">Transmembrane helix</keyword>
<protein>
    <recommendedName>
        <fullName>Olfactory receptor 5H2</fullName>
    </recommendedName>
    <alternativeName>
        <fullName>Olfactory receptor OR3-10</fullName>
    </alternativeName>
</protein>
<reference key="1">
    <citation type="submission" date="2001-07" db="EMBL/GenBank/DDBJ databases">
        <title>Genome-wide discovery and analysis of human seven transmembrane helix receptor genes.</title>
        <authorList>
            <person name="Suwa M."/>
            <person name="Sato T."/>
            <person name="Okouchi I."/>
            <person name="Arita M."/>
            <person name="Futami K."/>
            <person name="Matsumoto S."/>
            <person name="Tsutsumi S."/>
            <person name="Aburatani H."/>
            <person name="Asai K."/>
            <person name="Akiyama Y."/>
        </authorList>
    </citation>
    <scope>NUCLEOTIDE SEQUENCE [GENOMIC DNA]</scope>
</reference>
<reference key="2">
    <citation type="journal article" date="2006" name="Nature">
        <title>The DNA sequence, annotation and analysis of human chromosome 3.</title>
        <authorList>
            <person name="Muzny D.M."/>
            <person name="Scherer S.E."/>
            <person name="Kaul R."/>
            <person name="Wang J."/>
            <person name="Yu J."/>
            <person name="Sudbrak R."/>
            <person name="Buhay C.J."/>
            <person name="Chen R."/>
            <person name="Cree A."/>
            <person name="Ding Y."/>
            <person name="Dugan-Rocha S."/>
            <person name="Gill R."/>
            <person name="Gunaratne P."/>
            <person name="Harris R.A."/>
            <person name="Hawes A.C."/>
            <person name="Hernandez J."/>
            <person name="Hodgson A.V."/>
            <person name="Hume J."/>
            <person name="Jackson A."/>
            <person name="Khan Z.M."/>
            <person name="Kovar-Smith C."/>
            <person name="Lewis L.R."/>
            <person name="Lozado R.J."/>
            <person name="Metzker M.L."/>
            <person name="Milosavljevic A."/>
            <person name="Miner G.R."/>
            <person name="Morgan M.B."/>
            <person name="Nazareth L.V."/>
            <person name="Scott G."/>
            <person name="Sodergren E."/>
            <person name="Song X.-Z."/>
            <person name="Steffen D."/>
            <person name="Wei S."/>
            <person name="Wheeler D.A."/>
            <person name="Wright M.W."/>
            <person name="Worley K.C."/>
            <person name="Yuan Y."/>
            <person name="Zhang Z."/>
            <person name="Adams C.Q."/>
            <person name="Ansari-Lari M.A."/>
            <person name="Ayele M."/>
            <person name="Brown M.J."/>
            <person name="Chen G."/>
            <person name="Chen Z."/>
            <person name="Clendenning J."/>
            <person name="Clerc-Blankenburg K.P."/>
            <person name="Chen R."/>
            <person name="Chen Z."/>
            <person name="Davis C."/>
            <person name="Delgado O."/>
            <person name="Dinh H.H."/>
            <person name="Dong W."/>
            <person name="Draper H."/>
            <person name="Ernst S."/>
            <person name="Fu G."/>
            <person name="Gonzalez-Garay M.L."/>
            <person name="Garcia D.K."/>
            <person name="Gillett W."/>
            <person name="Gu J."/>
            <person name="Hao B."/>
            <person name="Haugen E."/>
            <person name="Havlak P."/>
            <person name="He X."/>
            <person name="Hennig S."/>
            <person name="Hu S."/>
            <person name="Huang W."/>
            <person name="Jackson L.R."/>
            <person name="Jacob L.S."/>
            <person name="Kelly S.H."/>
            <person name="Kube M."/>
            <person name="Levy R."/>
            <person name="Li Z."/>
            <person name="Liu B."/>
            <person name="Liu J."/>
            <person name="Liu W."/>
            <person name="Lu J."/>
            <person name="Maheshwari M."/>
            <person name="Nguyen B.-V."/>
            <person name="Okwuonu G.O."/>
            <person name="Palmeiri A."/>
            <person name="Pasternak S."/>
            <person name="Perez L.M."/>
            <person name="Phelps K.A."/>
            <person name="Plopper F.J."/>
            <person name="Qiang B."/>
            <person name="Raymond C."/>
            <person name="Rodriguez R."/>
            <person name="Saenphimmachak C."/>
            <person name="Santibanez J."/>
            <person name="Shen H."/>
            <person name="Shen Y."/>
            <person name="Subramanian S."/>
            <person name="Tabor P.E."/>
            <person name="Verduzco D."/>
            <person name="Waldron L."/>
            <person name="Wang J."/>
            <person name="Wang J."/>
            <person name="Wang Q."/>
            <person name="Williams G.A."/>
            <person name="Wong G.K.-S."/>
            <person name="Yao Z."/>
            <person name="Zhang J."/>
            <person name="Zhang X."/>
            <person name="Zhao G."/>
            <person name="Zhou J."/>
            <person name="Zhou Y."/>
            <person name="Nelson D."/>
            <person name="Lehrach H."/>
            <person name="Reinhardt R."/>
            <person name="Naylor S.L."/>
            <person name="Yang H."/>
            <person name="Olson M."/>
            <person name="Weinstock G."/>
            <person name="Gibbs R.A."/>
        </authorList>
    </citation>
    <scope>NUCLEOTIDE SEQUENCE [LARGE SCALE GENOMIC DNA]</scope>
</reference>
<reference key="3">
    <citation type="journal article" date="2004" name="Proc. Natl. Acad. Sci. U.S.A.">
        <title>The human olfactory receptor gene family.</title>
        <authorList>
            <person name="Malnic B."/>
            <person name="Godfrey P.A."/>
            <person name="Buck L.B."/>
        </authorList>
    </citation>
    <scope>IDENTIFICATION</scope>
</reference>
<reference key="4">
    <citation type="journal article" date="2004" name="Proc. Natl. Acad. Sci. U.S.A.">
        <authorList>
            <person name="Malnic B."/>
            <person name="Godfrey P.A."/>
            <person name="Buck L.B."/>
        </authorList>
    </citation>
    <scope>ERRATUM OF PUBMED:14983052</scope>
</reference>
<organism>
    <name type="scientific">Homo sapiens</name>
    <name type="common">Human</name>
    <dbReference type="NCBI Taxonomy" id="9606"/>
    <lineage>
        <taxon>Eukaryota</taxon>
        <taxon>Metazoa</taxon>
        <taxon>Chordata</taxon>
        <taxon>Craniata</taxon>
        <taxon>Vertebrata</taxon>
        <taxon>Euteleostomi</taxon>
        <taxon>Mammalia</taxon>
        <taxon>Eutheria</taxon>
        <taxon>Euarchontoglires</taxon>
        <taxon>Primates</taxon>
        <taxon>Haplorrhini</taxon>
        <taxon>Catarrhini</taxon>
        <taxon>Hominidae</taxon>
        <taxon>Homo</taxon>
    </lineage>
</organism>
<sequence length="309" mass="35397">MEQDNTTLLTEFVLTGLTYQPEWKMPLFLVFLVIYLITIVWNLGLIALIWNDPQLHIPMYFFLGSLAFVDAWISSTVTPKMLVNFLAKNRMISLSECMIQFFSFAFGGTTECFLLATMAYDRYVAICKPLLYPVIMNNSLCIRLLAFSFLGGFLHALIHEVLIFRLTFCNSNIIHHFYCDIIPLFMISCTDPSINFLMVFILSGSIQVFTIVTVLNSYTFALFTILKKKSVRGVRKAFSTCGAHLLSVSLYYGPLIFMYLRPASPQADDQDMIDSVFYTIIIPLLNPIIYSLRNKQVIDSFTKMVKRNV</sequence>
<feature type="chain" id="PRO_0000150596" description="Olfactory receptor 5H2">
    <location>
        <begin position="1"/>
        <end position="309"/>
    </location>
</feature>
<feature type="topological domain" description="Extracellular" evidence="1">
    <location>
        <begin position="1"/>
        <end position="28"/>
    </location>
</feature>
<feature type="transmembrane region" description="Helical; Name=1" evidence="1">
    <location>
        <begin position="29"/>
        <end position="49"/>
    </location>
</feature>
<feature type="topological domain" description="Cytoplasmic" evidence="1">
    <location>
        <begin position="50"/>
        <end position="56"/>
    </location>
</feature>
<feature type="transmembrane region" description="Helical; Name=2" evidence="1">
    <location>
        <begin position="57"/>
        <end position="77"/>
    </location>
</feature>
<feature type="topological domain" description="Extracellular" evidence="1">
    <location>
        <begin position="78"/>
        <end position="97"/>
    </location>
</feature>
<feature type="transmembrane region" description="Helical; Name=3" evidence="1">
    <location>
        <begin position="98"/>
        <end position="118"/>
    </location>
</feature>
<feature type="topological domain" description="Cytoplasmic" evidence="1">
    <location>
        <begin position="119"/>
        <end position="143"/>
    </location>
</feature>
<feature type="transmembrane region" description="Helical; Name=4" evidence="1">
    <location>
        <begin position="144"/>
        <end position="164"/>
    </location>
</feature>
<feature type="topological domain" description="Extracellular" evidence="1">
    <location>
        <begin position="165"/>
        <end position="193"/>
    </location>
</feature>
<feature type="transmembrane region" description="Helical; Name=5" evidence="1">
    <location>
        <begin position="194"/>
        <end position="214"/>
    </location>
</feature>
<feature type="topological domain" description="Cytoplasmic" evidence="1">
    <location>
        <begin position="215"/>
        <end position="239"/>
    </location>
</feature>
<feature type="transmembrane region" description="Helical; Name=6" evidence="1">
    <location>
        <begin position="240"/>
        <end position="260"/>
    </location>
</feature>
<feature type="topological domain" description="Extracellular" evidence="1">
    <location>
        <begin position="261"/>
        <end position="271"/>
    </location>
</feature>
<feature type="transmembrane region" description="Helical; Name=7" evidence="1">
    <location>
        <begin position="272"/>
        <end position="292"/>
    </location>
</feature>
<feature type="topological domain" description="Cytoplasmic" evidence="1">
    <location>
        <begin position="293"/>
        <end position="309"/>
    </location>
</feature>
<feature type="glycosylation site" description="N-linked (GlcNAc...) asparagine" evidence="1">
    <location>
        <position position="5"/>
    </location>
</feature>
<feature type="disulfide bond" evidence="2">
    <location>
        <begin position="97"/>
        <end position="179"/>
    </location>
</feature>
<feature type="sequence variant" id="VAR_053195" description="In dbSNP:rs16839214.">
    <original>I</original>
    <variation>V</variation>
    <location>
        <position position="225"/>
    </location>
</feature>
<feature type="sequence variant" id="VAR_053196" description="In dbSNP:rs17787561.">
    <original>R</original>
    <variation>C</variation>
    <location>
        <position position="261"/>
    </location>
</feature>
<feature type="sequence variant" id="VAR_053197" description="In dbSNP:rs16839611.">
    <original>I</original>
    <variation>V</variation>
    <location>
        <position position="281"/>
    </location>
</feature>
<dbReference type="EMBL" id="AB065666">
    <property type="protein sequence ID" value="BAC05892.1"/>
    <property type="status" value="ALT_INIT"/>
    <property type="molecule type" value="Genomic_DNA"/>
</dbReference>
<dbReference type="EMBL" id="AC117473">
    <property type="status" value="NOT_ANNOTATED_CDS"/>
    <property type="molecule type" value="Genomic_DNA"/>
</dbReference>
<dbReference type="EMBL" id="BK004375">
    <property type="protein sequence ID" value="DAA04773.1"/>
    <property type="status" value="ALT_INIT"/>
    <property type="molecule type" value="Genomic_DNA"/>
</dbReference>
<dbReference type="CCDS" id="CCDS33801.2"/>
<dbReference type="RefSeq" id="NP_001005482.2">
    <property type="nucleotide sequence ID" value="NM_001005482.2"/>
</dbReference>
<dbReference type="SMR" id="Q8NGV7"/>
<dbReference type="FunCoup" id="Q8NGV7">
    <property type="interactions" value="417"/>
</dbReference>
<dbReference type="STRING" id="9606.ENSP00000347418"/>
<dbReference type="GlyCosmos" id="Q8NGV7">
    <property type="glycosylation" value="1 site, No reported glycans"/>
</dbReference>
<dbReference type="GlyGen" id="Q8NGV7">
    <property type="glycosylation" value="1 site"/>
</dbReference>
<dbReference type="BioMuta" id="OR5H2"/>
<dbReference type="DMDM" id="212276497"/>
<dbReference type="MassIVE" id="Q8NGV7"/>
<dbReference type="PaxDb" id="9606-ENSP00000347418"/>
<dbReference type="Antibodypedia" id="66603">
    <property type="antibodies" value="73 antibodies from 16 providers"/>
</dbReference>
<dbReference type="DNASU" id="79310"/>
<dbReference type="Ensembl" id="ENST00000355273.3">
    <property type="protein sequence ID" value="ENSP00000347418.3"/>
    <property type="gene ID" value="ENSG00000197938.6"/>
</dbReference>
<dbReference type="GeneID" id="79310"/>
<dbReference type="KEGG" id="hsa:79310"/>
<dbReference type="MANE-Select" id="ENST00000355273.3">
    <property type="protein sequence ID" value="ENSP00000347418.3"/>
    <property type="RefSeq nucleotide sequence ID" value="NM_001005482.2"/>
    <property type="RefSeq protein sequence ID" value="NP_001005482.2"/>
</dbReference>
<dbReference type="UCSC" id="uc003dsj.1">
    <property type="organism name" value="human"/>
</dbReference>
<dbReference type="AGR" id="HGNC:14752"/>
<dbReference type="CTD" id="79310"/>
<dbReference type="GeneCards" id="OR5H2"/>
<dbReference type="HGNC" id="HGNC:14752">
    <property type="gene designation" value="OR5H2"/>
</dbReference>
<dbReference type="HPA" id="ENSG00000197938">
    <property type="expression patterns" value="Not detected"/>
</dbReference>
<dbReference type="neXtProt" id="NX_Q8NGV7"/>
<dbReference type="OpenTargets" id="ENSG00000197938"/>
<dbReference type="PharmGKB" id="PA32533"/>
<dbReference type="VEuPathDB" id="HostDB:ENSG00000197938"/>
<dbReference type="eggNOG" id="ENOG502T9JQ">
    <property type="taxonomic scope" value="Eukaryota"/>
</dbReference>
<dbReference type="GeneTree" id="ENSGT01120000271834"/>
<dbReference type="HOGENOM" id="CLU_012526_5_5_1"/>
<dbReference type="InParanoid" id="Q8NGV7"/>
<dbReference type="OMA" id="YLITMVW"/>
<dbReference type="OrthoDB" id="9615015at2759"/>
<dbReference type="PAN-GO" id="Q8NGV7">
    <property type="GO annotations" value="2 GO annotations based on evolutionary models"/>
</dbReference>
<dbReference type="PhylomeDB" id="Q8NGV7"/>
<dbReference type="TreeFam" id="TF352737"/>
<dbReference type="PathwayCommons" id="Q8NGV7"/>
<dbReference type="Reactome" id="R-HSA-9752946">
    <property type="pathway name" value="Expression and translocation of olfactory receptors"/>
</dbReference>
<dbReference type="BioGRID-ORCS" id="79310">
    <property type="hits" value="7 hits in 736 CRISPR screens"/>
</dbReference>
<dbReference type="GeneWiki" id="OR5H2"/>
<dbReference type="GenomeRNAi" id="79310"/>
<dbReference type="Pharos" id="Q8NGV7">
    <property type="development level" value="Tdark"/>
</dbReference>
<dbReference type="PRO" id="PR:Q8NGV7"/>
<dbReference type="Proteomes" id="UP000005640">
    <property type="component" value="Chromosome 3"/>
</dbReference>
<dbReference type="RNAct" id="Q8NGV7">
    <property type="molecule type" value="protein"/>
</dbReference>
<dbReference type="Bgee" id="ENSG00000197938">
    <property type="expression patterns" value="Expressed in granulocyte and 2 other cell types or tissues"/>
</dbReference>
<dbReference type="ExpressionAtlas" id="Q8NGV7">
    <property type="expression patterns" value="baseline and differential"/>
</dbReference>
<dbReference type="GO" id="GO:0005886">
    <property type="term" value="C:plasma membrane"/>
    <property type="evidence" value="ECO:0007669"/>
    <property type="project" value="UniProtKB-SubCell"/>
</dbReference>
<dbReference type="GO" id="GO:0004930">
    <property type="term" value="F:G protein-coupled receptor activity"/>
    <property type="evidence" value="ECO:0007669"/>
    <property type="project" value="UniProtKB-KW"/>
</dbReference>
<dbReference type="GO" id="GO:0005549">
    <property type="term" value="F:odorant binding"/>
    <property type="evidence" value="ECO:0000318"/>
    <property type="project" value="GO_Central"/>
</dbReference>
<dbReference type="GO" id="GO:0004984">
    <property type="term" value="F:olfactory receptor activity"/>
    <property type="evidence" value="ECO:0000318"/>
    <property type="project" value="GO_Central"/>
</dbReference>
<dbReference type="CDD" id="cd15409">
    <property type="entry name" value="7tmA_OR5H-like"/>
    <property type="match status" value="1"/>
</dbReference>
<dbReference type="FunFam" id="1.20.1070.10:FF:000004">
    <property type="entry name" value="Olfactory receptor"/>
    <property type="match status" value="1"/>
</dbReference>
<dbReference type="Gene3D" id="1.20.1070.10">
    <property type="entry name" value="Rhodopsin 7-helix transmembrane proteins"/>
    <property type="match status" value="1"/>
</dbReference>
<dbReference type="InterPro" id="IPR000276">
    <property type="entry name" value="GPCR_Rhodpsn"/>
</dbReference>
<dbReference type="InterPro" id="IPR017452">
    <property type="entry name" value="GPCR_Rhodpsn_7TM"/>
</dbReference>
<dbReference type="InterPro" id="IPR000725">
    <property type="entry name" value="Olfact_rcpt"/>
</dbReference>
<dbReference type="PANTHER" id="PTHR48018">
    <property type="entry name" value="OLFACTORY RECEPTOR"/>
    <property type="match status" value="1"/>
</dbReference>
<dbReference type="Pfam" id="PF13853">
    <property type="entry name" value="7tm_4"/>
    <property type="match status" value="1"/>
</dbReference>
<dbReference type="PRINTS" id="PR00237">
    <property type="entry name" value="GPCRRHODOPSN"/>
</dbReference>
<dbReference type="PRINTS" id="PR00245">
    <property type="entry name" value="OLFACTORYR"/>
</dbReference>
<dbReference type="SUPFAM" id="SSF81321">
    <property type="entry name" value="Family A G protein-coupled receptor-like"/>
    <property type="match status" value="1"/>
</dbReference>
<dbReference type="PROSITE" id="PS00237">
    <property type="entry name" value="G_PROTEIN_RECEP_F1_1"/>
    <property type="match status" value="1"/>
</dbReference>
<dbReference type="PROSITE" id="PS50262">
    <property type="entry name" value="G_PROTEIN_RECEP_F1_2"/>
    <property type="match status" value="1"/>
</dbReference>
<accession>Q8NGV7</accession>
<accession>Q6IF87</accession>
<name>OR5H2_HUMAN</name>